<keyword id="KW-1185">Reference proteome</keyword>
<keyword id="KW-0687">Ribonucleoprotein</keyword>
<keyword id="KW-0689">Ribosomal protein</keyword>
<keyword id="KW-0694">RNA-binding</keyword>
<keyword id="KW-0699">rRNA-binding</keyword>
<accession>Q5GWV1</accession>
<proteinExistence type="inferred from homology"/>
<feature type="chain" id="PRO_0000131637" description="Small ribosomal subunit protein uS5">
    <location>
        <begin position="1"/>
        <end position="180"/>
    </location>
</feature>
<feature type="domain" description="S5 DRBM" evidence="1">
    <location>
        <begin position="24"/>
        <end position="87"/>
    </location>
</feature>
<reference key="1">
    <citation type="journal article" date="2005" name="Nucleic Acids Res.">
        <title>The genome sequence of Xanthomonas oryzae pathovar oryzae KACC10331, the bacterial blight pathogen of rice.</title>
        <authorList>
            <person name="Lee B.-M."/>
            <person name="Park Y.-J."/>
            <person name="Park D.-S."/>
            <person name="Kang H.-W."/>
            <person name="Kim J.-G."/>
            <person name="Song E.-S."/>
            <person name="Park I.-C."/>
            <person name="Yoon U.-H."/>
            <person name="Hahn J.-H."/>
            <person name="Koo B.-S."/>
            <person name="Lee G.-B."/>
            <person name="Kim H."/>
            <person name="Park H.-S."/>
            <person name="Yoon K.-O."/>
            <person name="Kim J.-H."/>
            <person name="Jung C.-H."/>
            <person name="Koh N.-H."/>
            <person name="Seo J.-S."/>
            <person name="Go S.-J."/>
        </authorList>
    </citation>
    <scope>NUCLEOTIDE SEQUENCE [LARGE SCALE GENOMIC DNA]</scope>
    <source>
        <strain>KACC10331 / KXO85</strain>
    </source>
</reference>
<comment type="function">
    <text evidence="1">With S4 and S12 plays an important role in translational accuracy.</text>
</comment>
<comment type="function">
    <text evidence="1">Located at the back of the 30S subunit body where it stabilizes the conformation of the head with respect to the body.</text>
</comment>
<comment type="subunit">
    <text evidence="1">Part of the 30S ribosomal subunit. Contacts proteins S4 and S8.</text>
</comment>
<comment type="domain">
    <text>The N-terminal domain interacts with the head of the 30S subunit; the C-terminal domain interacts with the body and contacts protein S4. The interaction surface between S4 and S5 is involved in control of translational fidelity.</text>
</comment>
<comment type="similarity">
    <text evidence="1">Belongs to the universal ribosomal protein uS5 family.</text>
</comment>
<gene>
    <name evidence="1" type="primary">rpsE</name>
    <name type="ordered locus">XOO3566</name>
</gene>
<organism>
    <name type="scientific">Xanthomonas oryzae pv. oryzae (strain KACC10331 / KXO85)</name>
    <dbReference type="NCBI Taxonomy" id="291331"/>
    <lineage>
        <taxon>Bacteria</taxon>
        <taxon>Pseudomonadati</taxon>
        <taxon>Pseudomonadota</taxon>
        <taxon>Gammaproteobacteria</taxon>
        <taxon>Lysobacterales</taxon>
        <taxon>Lysobacteraceae</taxon>
        <taxon>Xanthomonas</taxon>
    </lineage>
</organism>
<sequence length="180" mass="19182">MAEERAPRGRDRDRNREEKVDDGMIEKLVAVNRVSKTVKGGRQFTFTALTVVGDGLGKVGFGYGKAREVPVAIQKSMEQARKNLATVDLNNGTLWHAVKSGHGAARVYMQPASEGTGVIAGGAMRAVLEAVGVKNVLAKAVGSRNPINLVRATLKGLSEVQSPARVAAKRGKKVEELNHG</sequence>
<evidence type="ECO:0000255" key="1">
    <source>
        <dbReference type="HAMAP-Rule" id="MF_01307"/>
    </source>
</evidence>
<evidence type="ECO:0000305" key="2"/>
<name>RS5_XANOR</name>
<dbReference type="EMBL" id="AE013598">
    <property type="protein sequence ID" value="AAW76820.1"/>
    <property type="molecule type" value="Genomic_DNA"/>
</dbReference>
<dbReference type="SMR" id="Q5GWV1"/>
<dbReference type="STRING" id="291331.XOO3566"/>
<dbReference type="KEGG" id="xoo:XOO3566"/>
<dbReference type="HOGENOM" id="CLU_065898_2_2_6"/>
<dbReference type="Proteomes" id="UP000006735">
    <property type="component" value="Chromosome"/>
</dbReference>
<dbReference type="GO" id="GO:0015935">
    <property type="term" value="C:small ribosomal subunit"/>
    <property type="evidence" value="ECO:0007669"/>
    <property type="project" value="InterPro"/>
</dbReference>
<dbReference type="GO" id="GO:0019843">
    <property type="term" value="F:rRNA binding"/>
    <property type="evidence" value="ECO:0007669"/>
    <property type="project" value="UniProtKB-UniRule"/>
</dbReference>
<dbReference type="GO" id="GO:0003735">
    <property type="term" value="F:structural constituent of ribosome"/>
    <property type="evidence" value="ECO:0007669"/>
    <property type="project" value="InterPro"/>
</dbReference>
<dbReference type="GO" id="GO:0006412">
    <property type="term" value="P:translation"/>
    <property type="evidence" value="ECO:0007669"/>
    <property type="project" value="UniProtKB-UniRule"/>
</dbReference>
<dbReference type="FunFam" id="3.30.160.20:FF:000001">
    <property type="entry name" value="30S ribosomal protein S5"/>
    <property type="match status" value="1"/>
</dbReference>
<dbReference type="FunFam" id="3.30.230.10:FF:000002">
    <property type="entry name" value="30S ribosomal protein S5"/>
    <property type="match status" value="1"/>
</dbReference>
<dbReference type="Gene3D" id="3.30.160.20">
    <property type="match status" value="1"/>
</dbReference>
<dbReference type="Gene3D" id="3.30.230.10">
    <property type="match status" value="1"/>
</dbReference>
<dbReference type="HAMAP" id="MF_01307_B">
    <property type="entry name" value="Ribosomal_uS5_B"/>
    <property type="match status" value="1"/>
</dbReference>
<dbReference type="InterPro" id="IPR020568">
    <property type="entry name" value="Ribosomal_Su5_D2-typ_SF"/>
</dbReference>
<dbReference type="InterPro" id="IPR000851">
    <property type="entry name" value="Ribosomal_uS5"/>
</dbReference>
<dbReference type="InterPro" id="IPR005712">
    <property type="entry name" value="Ribosomal_uS5_bac-type"/>
</dbReference>
<dbReference type="InterPro" id="IPR005324">
    <property type="entry name" value="Ribosomal_uS5_C"/>
</dbReference>
<dbReference type="InterPro" id="IPR013810">
    <property type="entry name" value="Ribosomal_uS5_N"/>
</dbReference>
<dbReference type="InterPro" id="IPR018192">
    <property type="entry name" value="Ribosomal_uS5_N_CS"/>
</dbReference>
<dbReference type="InterPro" id="IPR014721">
    <property type="entry name" value="Ribsml_uS5_D2-typ_fold_subgr"/>
</dbReference>
<dbReference type="NCBIfam" id="TIGR01021">
    <property type="entry name" value="rpsE_bact"/>
    <property type="match status" value="1"/>
</dbReference>
<dbReference type="PANTHER" id="PTHR48277">
    <property type="entry name" value="MITOCHONDRIAL RIBOSOMAL PROTEIN S5"/>
    <property type="match status" value="1"/>
</dbReference>
<dbReference type="PANTHER" id="PTHR48277:SF1">
    <property type="entry name" value="MITOCHONDRIAL RIBOSOMAL PROTEIN S5"/>
    <property type="match status" value="1"/>
</dbReference>
<dbReference type="Pfam" id="PF00333">
    <property type="entry name" value="Ribosomal_S5"/>
    <property type="match status" value="1"/>
</dbReference>
<dbReference type="Pfam" id="PF03719">
    <property type="entry name" value="Ribosomal_S5_C"/>
    <property type="match status" value="1"/>
</dbReference>
<dbReference type="SUPFAM" id="SSF54768">
    <property type="entry name" value="dsRNA-binding domain-like"/>
    <property type="match status" value="1"/>
</dbReference>
<dbReference type="SUPFAM" id="SSF54211">
    <property type="entry name" value="Ribosomal protein S5 domain 2-like"/>
    <property type="match status" value="1"/>
</dbReference>
<dbReference type="PROSITE" id="PS00585">
    <property type="entry name" value="RIBOSOMAL_S5"/>
    <property type="match status" value="1"/>
</dbReference>
<dbReference type="PROSITE" id="PS50881">
    <property type="entry name" value="S5_DSRBD"/>
    <property type="match status" value="1"/>
</dbReference>
<protein>
    <recommendedName>
        <fullName evidence="1">Small ribosomal subunit protein uS5</fullName>
    </recommendedName>
    <alternativeName>
        <fullName evidence="2">30S ribosomal protein S5</fullName>
    </alternativeName>
</protein>